<reference key="1">
    <citation type="journal article" date="1997" name="Res. Microbiol.">
        <title>Molecular characterization of the Salmonella typhi StpA protein that is related to both Yersinia YopE cytotoxin and YopH tyrosine phosphatase.</title>
        <authorList>
            <person name="Arricau N."/>
            <person name="Hermant D."/>
            <person name="Waxin H."/>
            <person name="Popoff M.Y."/>
        </authorList>
    </citation>
    <scope>NUCLEOTIDE SEQUENCE [GENOMIC DNA]</scope>
    <source>
        <strain>ATCC 700931 / Ty2</strain>
    </source>
</reference>
<reference key="2">
    <citation type="journal article" date="2001" name="Nature">
        <title>Complete genome sequence of a multiple drug resistant Salmonella enterica serovar Typhi CT18.</title>
        <authorList>
            <person name="Parkhill J."/>
            <person name="Dougan G."/>
            <person name="James K.D."/>
            <person name="Thomson N.R."/>
            <person name="Pickard D."/>
            <person name="Wain J."/>
            <person name="Churcher C.M."/>
            <person name="Mungall K.L."/>
            <person name="Bentley S.D."/>
            <person name="Holden M.T.G."/>
            <person name="Sebaihia M."/>
            <person name="Baker S."/>
            <person name="Basham D."/>
            <person name="Brooks K."/>
            <person name="Chillingworth T."/>
            <person name="Connerton P."/>
            <person name="Cronin A."/>
            <person name="Davis P."/>
            <person name="Davies R.M."/>
            <person name="Dowd L."/>
            <person name="White N."/>
            <person name="Farrar J."/>
            <person name="Feltwell T."/>
            <person name="Hamlin N."/>
            <person name="Haque A."/>
            <person name="Hien T.T."/>
            <person name="Holroyd S."/>
            <person name="Jagels K."/>
            <person name="Krogh A."/>
            <person name="Larsen T.S."/>
            <person name="Leather S."/>
            <person name="Moule S."/>
            <person name="O'Gaora P."/>
            <person name="Parry C."/>
            <person name="Quail M.A."/>
            <person name="Rutherford K.M."/>
            <person name="Simmonds M."/>
            <person name="Skelton J."/>
            <person name="Stevens K."/>
            <person name="Whitehead S."/>
            <person name="Barrell B.G."/>
        </authorList>
    </citation>
    <scope>NUCLEOTIDE SEQUENCE [LARGE SCALE GENOMIC DNA]</scope>
    <source>
        <strain>CT18</strain>
    </source>
</reference>
<reference key="3">
    <citation type="journal article" date="2003" name="J. Bacteriol.">
        <title>Comparative genomics of Salmonella enterica serovar Typhi strains Ty2 and CT18.</title>
        <authorList>
            <person name="Deng W."/>
            <person name="Liou S.-R."/>
            <person name="Plunkett G. III"/>
            <person name="Mayhew G.F."/>
            <person name="Rose D.J."/>
            <person name="Burland V."/>
            <person name="Kodoyianni V."/>
            <person name="Schwartz D.C."/>
            <person name="Blattner F.R."/>
        </authorList>
    </citation>
    <scope>NUCLEOTIDE SEQUENCE [LARGE SCALE GENOMIC DNA]</scope>
    <source>
        <strain>ATCC 700931 / Ty2</strain>
    </source>
</reference>
<name>SPTP_SALTI</name>
<protein>
    <recommendedName>
        <fullName>Secreted effector protein SptP</fullName>
    </recommendedName>
    <domain>
        <recommendedName>
            <fullName>GTPase-activating protein</fullName>
            <shortName>GAP</shortName>
        </recommendedName>
    </domain>
    <domain>
        <recommendedName>
            <fullName>Tyrosine-protein phosphatase</fullName>
            <ecNumber>3.1.3.48</ecNumber>
        </recommendedName>
    </domain>
</protein>
<sequence length="543" mass="59898">MLRYDERKLNNLTLSSFSKSGVSSDTRLYIAKENTDKAYVAPEKFSSKVLTWLGKMPLFKNTEVVQKHTENIRVQNQKILQTFLQALTEKYGEKAVNNALYMSSINMNKPLTQRLVVQITECVKGADGGFINLIKNKDNVGVMNAALVIKGGDTKVTEQNNDVGAESKQPLLDIALKGLKRTIPQLEQMDGNSLRENFQEMASGNGPLRSLMTNLQSLNKIPEAKQLNDYVTTLKNIQIGADRFSQWGTCGGEVERWIDKASTHELTQAVKKIHVIAKELKNVTAELEKIKAGASMPQTMSGPTLGLARFAVSSIPINQQTQVKLSDGMPVPVNTLTFDGKPVALAGSCPKNTPDALEAHMKMLLEKECSCLVVLTSEDQMQAKQLPAYFRGSYTFGEVHTNSQKVSSASQGGAIDQYNMQLSCGEKRYTIPVLHVKNWPDHQPLPSTDQLEYLADRVKNSNQNGAPGRSSSDKHLPMIHCLGGVGRTGTMAAALVLKDNPHSNLEQVRADFRNSRNNRMLEDASQFVQLKAMQAQLLMTTAS</sequence>
<feature type="chain" id="PRO_0000094865" description="Secreted effector protein SptP">
    <location>
        <begin position="1"/>
        <end position="543"/>
    </location>
</feature>
<feature type="domain" description="Bacterial Rho-GAP" evidence="3">
    <location>
        <begin position="162"/>
        <end position="293"/>
    </location>
</feature>
<feature type="domain" description="Tyrosine-protein phosphatase" evidence="2">
    <location>
        <begin position="315"/>
        <end position="543"/>
    </location>
</feature>
<feature type="region of interest" description="Chaperone-binding" evidence="1">
    <location>
        <begin position="35"/>
        <end position="139"/>
    </location>
</feature>
<feature type="active site" description="Phosphocysteine intermediate" evidence="2 4">
    <location>
        <position position="481"/>
    </location>
</feature>
<feature type="site" description="Arginine finger; crucial for GTP hydrolysis by stabilizing the transition state" evidence="3">
    <location>
        <position position="209"/>
    </location>
</feature>
<organism>
    <name type="scientific">Salmonella typhi</name>
    <dbReference type="NCBI Taxonomy" id="90370"/>
    <lineage>
        <taxon>Bacteria</taxon>
        <taxon>Pseudomonadati</taxon>
        <taxon>Pseudomonadota</taxon>
        <taxon>Gammaproteobacteria</taxon>
        <taxon>Enterobacterales</taxon>
        <taxon>Enterobacteriaceae</taxon>
        <taxon>Salmonella</taxon>
    </lineage>
</organism>
<gene>
    <name type="primary">sptP</name>
    <name type="synonym">stpA</name>
    <name type="ordered locus">STY3001</name>
    <name type="ordered locus">t2780</name>
</gene>
<proteinExistence type="inferred from homology"/>
<comment type="function">
    <text evidence="1">Effector proteins function to alter host cell physiology and promote bacterial survival in host tissues. This protein includes tyrosine phosphatase and GTPase activating protein (GAP) activities. After bacterial internalization, GAP mediates the reversal of the cytoskeletal changes induced by SopE. This function is independent of its tyrosine phosphatase activity, which remains unclear (By similarity).</text>
</comment>
<comment type="catalytic activity">
    <reaction evidence="4">
        <text>O-phospho-L-tyrosyl-[protein] + H2O = L-tyrosyl-[protein] + phosphate</text>
        <dbReference type="Rhea" id="RHEA:10684"/>
        <dbReference type="Rhea" id="RHEA-COMP:10136"/>
        <dbReference type="Rhea" id="RHEA-COMP:20101"/>
        <dbReference type="ChEBI" id="CHEBI:15377"/>
        <dbReference type="ChEBI" id="CHEBI:43474"/>
        <dbReference type="ChEBI" id="CHEBI:46858"/>
        <dbReference type="ChEBI" id="CHEBI:61978"/>
        <dbReference type="EC" id="3.1.3.48"/>
    </reaction>
</comment>
<comment type="subunit">
    <text evidence="1">Forms a complex with SicP.</text>
</comment>
<comment type="subcellular location">
    <subcellularLocation>
        <location evidence="1">Secreted</location>
    </subcellularLocation>
    <subcellularLocation>
        <location evidence="1">Host cytoplasm</location>
    </subcellularLocation>
    <text evidence="1">Secreted via type III secretion system 1 (SPI-1 T3SS), and delivered into the host cytoplasm.</text>
</comment>
<comment type="miscellaneous">
    <text evidence="1">Requires SicP as a chaperone for its stability and secretion.</text>
</comment>
<keyword id="KW-0343">GTPase activation</keyword>
<keyword id="KW-1035">Host cytoplasm</keyword>
<keyword id="KW-0378">Hydrolase</keyword>
<keyword id="KW-0904">Protein phosphatase</keyword>
<keyword id="KW-0964">Secreted</keyword>
<keyword id="KW-0843">Virulence</keyword>
<accession>P74851</accession>
<accession>Q7AME2</accession>
<accession>Q7C7N7</accession>
<evidence type="ECO:0000250" key="1"/>
<evidence type="ECO:0000255" key="2">
    <source>
        <dbReference type="PROSITE-ProRule" id="PRU00160"/>
    </source>
</evidence>
<evidence type="ECO:0000255" key="3">
    <source>
        <dbReference type="PROSITE-ProRule" id="PRU01404"/>
    </source>
</evidence>
<evidence type="ECO:0000255" key="4">
    <source>
        <dbReference type="PROSITE-ProRule" id="PRU10044"/>
    </source>
</evidence>
<dbReference type="EC" id="3.1.3.48"/>
<dbReference type="EMBL" id="X92546">
    <property type="protein sequence ID" value="CAA63304.1"/>
    <property type="molecule type" value="Genomic_DNA"/>
</dbReference>
<dbReference type="EMBL" id="AL513382">
    <property type="protein sequence ID" value="CAD05985.1"/>
    <property type="molecule type" value="Genomic_DNA"/>
</dbReference>
<dbReference type="EMBL" id="AE014613">
    <property type="protein sequence ID" value="AAO70341.1"/>
    <property type="molecule type" value="Genomic_DNA"/>
</dbReference>
<dbReference type="RefSeq" id="NP_457272.1">
    <property type="nucleotide sequence ID" value="NC_003198.1"/>
</dbReference>
<dbReference type="RefSeq" id="WP_000946989.1">
    <property type="nucleotide sequence ID" value="NZ_QXGZ01000003.1"/>
</dbReference>
<dbReference type="SMR" id="P74851"/>
<dbReference type="STRING" id="220341.gene:17586895"/>
<dbReference type="KEGG" id="stt:t2780"/>
<dbReference type="KEGG" id="sty:STY3001"/>
<dbReference type="PATRIC" id="fig|220341.7.peg.3055"/>
<dbReference type="eggNOG" id="COG5599">
    <property type="taxonomic scope" value="Bacteria"/>
</dbReference>
<dbReference type="HOGENOM" id="CLU_039619_0_0_6"/>
<dbReference type="OMA" id="GAIDQYN"/>
<dbReference type="OrthoDB" id="6199520at2"/>
<dbReference type="PHI-base" id="PHI:6798"/>
<dbReference type="Proteomes" id="UP000000541">
    <property type="component" value="Chromosome"/>
</dbReference>
<dbReference type="Proteomes" id="UP000002670">
    <property type="component" value="Chromosome"/>
</dbReference>
<dbReference type="GO" id="GO:0005615">
    <property type="term" value="C:extracellular space"/>
    <property type="evidence" value="ECO:0007669"/>
    <property type="project" value="InterPro"/>
</dbReference>
<dbReference type="GO" id="GO:0030430">
    <property type="term" value="C:host cell cytoplasm"/>
    <property type="evidence" value="ECO:0007669"/>
    <property type="project" value="UniProtKB-SubCell"/>
</dbReference>
<dbReference type="GO" id="GO:0005096">
    <property type="term" value="F:GTPase activator activity"/>
    <property type="evidence" value="ECO:0007669"/>
    <property type="project" value="UniProtKB-KW"/>
</dbReference>
<dbReference type="GO" id="GO:0004725">
    <property type="term" value="F:protein tyrosine phosphatase activity"/>
    <property type="evidence" value="ECO:0007669"/>
    <property type="project" value="UniProtKB-EC"/>
</dbReference>
<dbReference type="CDD" id="cd14559">
    <property type="entry name" value="PTP_YopH-like"/>
    <property type="match status" value="1"/>
</dbReference>
<dbReference type="CDD" id="cd00219">
    <property type="entry name" value="ToxGAP"/>
    <property type="match status" value="1"/>
</dbReference>
<dbReference type="Gene3D" id="4.10.1330.10">
    <property type="entry name" value="non globular Virulence effector SptP domain"/>
    <property type="match status" value="1"/>
</dbReference>
<dbReference type="Gene3D" id="3.90.190.10">
    <property type="entry name" value="Protein tyrosine phosphatase superfamily"/>
    <property type="match status" value="1"/>
</dbReference>
<dbReference type="Gene3D" id="1.20.120.260">
    <property type="entry name" value="Virulence factor YopE uncharacterised domain"/>
    <property type="match status" value="1"/>
</dbReference>
<dbReference type="InterPro" id="IPR011070">
    <property type="entry name" value="Globular_prot_asu/bsu"/>
</dbReference>
<dbReference type="InterPro" id="IPR029021">
    <property type="entry name" value="Prot-tyrosine_phosphatase-like"/>
</dbReference>
<dbReference type="InterPro" id="IPR050348">
    <property type="entry name" value="Protein-Tyr_Phosphatase"/>
</dbReference>
<dbReference type="InterPro" id="IPR000242">
    <property type="entry name" value="PTP_cat"/>
</dbReference>
<dbReference type="InterPro" id="IPR015203">
    <property type="entry name" value="SptP_N"/>
</dbReference>
<dbReference type="InterPro" id="IPR044899">
    <property type="entry name" value="SptP_N_sf"/>
</dbReference>
<dbReference type="InterPro" id="IPR016130">
    <property type="entry name" value="Tyr_Pase_AS"/>
</dbReference>
<dbReference type="InterPro" id="IPR003595">
    <property type="entry name" value="Tyr_Pase_cat"/>
</dbReference>
<dbReference type="InterPro" id="IPR000387">
    <property type="entry name" value="Tyr_Pase_dom"/>
</dbReference>
<dbReference type="InterPro" id="IPR003546">
    <property type="entry name" value="Tyr_Pase_SptP/YopH"/>
</dbReference>
<dbReference type="InterPro" id="IPR014773">
    <property type="entry name" value="YopE_GAP_dom"/>
</dbReference>
<dbReference type="InterPro" id="IPR037168">
    <property type="entry name" value="YopE_GAP_dom_sf"/>
</dbReference>
<dbReference type="NCBIfam" id="NF011902">
    <property type="entry name" value="PRK15375.1"/>
    <property type="match status" value="1"/>
</dbReference>
<dbReference type="PANTHER" id="PTHR19134">
    <property type="entry name" value="RECEPTOR-TYPE TYROSINE-PROTEIN PHOSPHATASE"/>
    <property type="match status" value="1"/>
</dbReference>
<dbReference type="PANTHER" id="PTHR19134:SF449">
    <property type="entry name" value="TYROSINE-PROTEIN PHOSPHATASE 1"/>
    <property type="match status" value="1"/>
</dbReference>
<dbReference type="Pfam" id="PF09119">
    <property type="entry name" value="SicP-binding"/>
    <property type="match status" value="1"/>
</dbReference>
<dbReference type="Pfam" id="PF00102">
    <property type="entry name" value="Y_phosphatase"/>
    <property type="match status" value="1"/>
</dbReference>
<dbReference type="Pfam" id="PF03545">
    <property type="entry name" value="YopE"/>
    <property type="match status" value="1"/>
</dbReference>
<dbReference type="PRINTS" id="PR01371">
    <property type="entry name" value="BACYPHPHTASE"/>
</dbReference>
<dbReference type="SMART" id="SM00194">
    <property type="entry name" value="PTPc"/>
    <property type="match status" value="1"/>
</dbReference>
<dbReference type="SMART" id="SM00404">
    <property type="entry name" value="PTPc_motif"/>
    <property type="match status" value="1"/>
</dbReference>
<dbReference type="SUPFAM" id="SSF52799">
    <property type="entry name" value="(Phosphotyrosine protein) phosphatases II"/>
    <property type="match status" value="1"/>
</dbReference>
<dbReference type="SUPFAM" id="SSF47233">
    <property type="entry name" value="Bacterial GAP domain"/>
    <property type="match status" value="1"/>
</dbReference>
<dbReference type="SUPFAM" id="SSF56568">
    <property type="entry name" value="Non-globular alpha+beta subunits of globular proteins"/>
    <property type="match status" value="1"/>
</dbReference>
<dbReference type="PROSITE" id="PS52059">
    <property type="entry name" value="BACT_RHOGAP"/>
    <property type="match status" value="1"/>
</dbReference>
<dbReference type="PROSITE" id="PS00383">
    <property type="entry name" value="TYR_PHOSPHATASE_1"/>
    <property type="match status" value="1"/>
</dbReference>
<dbReference type="PROSITE" id="PS50056">
    <property type="entry name" value="TYR_PHOSPHATASE_2"/>
    <property type="match status" value="1"/>
</dbReference>
<dbReference type="PROSITE" id="PS50055">
    <property type="entry name" value="TYR_PHOSPHATASE_PTP"/>
    <property type="match status" value="1"/>
</dbReference>